<sequence>MAITKSKQQKTRKKVKRVVSDGIVHIHASFNNTIVTFTDRQGNALCWATSGGSGFRGSRKSTPYAAQVATERAAAVAKEYGMKSVAVFVHGPGPGRESTIRELITQDFKIVEITDVTGIPHNGCKPPKKRRV</sequence>
<reference key="1">
    <citation type="journal article" date="2004" name="Science">
        <title>The genomic sequence of the accidental pathogen Legionella pneumophila.</title>
        <authorList>
            <person name="Chien M."/>
            <person name="Morozova I."/>
            <person name="Shi S."/>
            <person name="Sheng H."/>
            <person name="Chen J."/>
            <person name="Gomez S.M."/>
            <person name="Asamani G."/>
            <person name="Hill K."/>
            <person name="Nuara J."/>
            <person name="Feder M."/>
            <person name="Rineer J."/>
            <person name="Greenberg J.J."/>
            <person name="Steshenko V."/>
            <person name="Park S.H."/>
            <person name="Zhao B."/>
            <person name="Teplitskaya E."/>
            <person name="Edwards J.R."/>
            <person name="Pampou S."/>
            <person name="Georghiou A."/>
            <person name="Chou I.-C."/>
            <person name="Iannuccilli W."/>
            <person name="Ulz M.E."/>
            <person name="Kim D.H."/>
            <person name="Geringer-Sameth A."/>
            <person name="Goldsberry C."/>
            <person name="Morozov P."/>
            <person name="Fischer S.G."/>
            <person name="Segal G."/>
            <person name="Qu X."/>
            <person name="Rzhetsky A."/>
            <person name="Zhang P."/>
            <person name="Cayanis E."/>
            <person name="De Jong P.J."/>
            <person name="Ju J."/>
            <person name="Kalachikov S."/>
            <person name="Shuman H.A."/>
            <person name="Russo J.J."/>
        </authorList>
    </citation>
    <scope>NUCLEOTIDE SEQUENCE [LARGE SCALE GENOMIC DNA]</scope>
    <source>
        <strain>Philadelphia 1 / ATCC 33152 / DSM 7513</strain>
    </source>
</reference>
<keyword id="KW-1185">Reference proteome</keyword>
<keyword id="KW-0687">Ribonucleoprotein</keyword>
<keyword id="KW-0689">Ribosomal protein</keyword>
<keyword id="KW-0694">RNA-binding</keyword>
<keyword id="KW-0699">rRNA-binding</keyword>
<proteinExistence type="inferred from homology"/>
<feature type="chain" id="PRO_0000123164" description="Small ribosomal subunit protein uS11">
    <location>
        <begin position="1"/>
        <end position="132"/>
    </location>
</feature>
<dbReference type="EMBL" id="AE017354">
    <property type="protein sequence ID" value="AAU26449.1"/>
    <property type="molecule type" value="Genomic_DNA"/>
</dbReference>
<dbReference type="RefSeq" id="WP_010946101.1">
    <property type="nucleotide sequence ID" value="NC_002942.5"/>
</dbReference>
<dbReference type="RefSeq" id="YP_094396.1">
    <property type="nucleotide sequence ID" value="NC_002942.5"/>
</dbReference>
<dbReference type="SMR" id="Q5ZYM0"/>
<dbReference type="STRING" id="272624.lpg0352"/>
<dbReference type="PaxDb" id="272624-lpg0352"/>
<dbReference type="GeneID" id="57034355"/>
<dbReference type="KEGG" id="lpn:lpg0352"/>
<dbReference type="PATRIC" id="fig|272624.6.peg.359"/>
<dbReference type="eggNOG" id="COG0100">
    <property type="taxonomic scope" value="Bacteria"/>
</dbReference>
<dbReference type="HOGENOM" id="CLU_072439_5_0_6"/>
<dbReference type="OrthoDB" id="9806415at2"/>
<dbReference type="Proteomes" id="UP000000609">
    <property type="component" value="Chromosome"/>
</dbReference>
<dbReference type="GO" id="GO:1990904">
    <property type="term" value="C:ribonucleoprotein complex"/>
    <property type="evidence" value="ECO:0007669"/>
    <property type="project" value="UniProtKB-KW"/>
</dbReference>
<dbReference type="GO" id="GO:0005840">
    <property type="term" value="C:ribosome"/>
    <property type="evidence" value="ECO:0007669"/>
    <property type="project" value="UniProtKB-KW"/>
</dbReference>
<dbReference type="GO" id="GO:0019843">
    <property type="term" value="F:rRNA binding"/>
    <property type="evidence" value="ECO:0007669"/>
    <property type="project" value="UniProtKB-UniRule"/>
</dbReference>
<dbReference type="GO" id="GO:0003735">
    <property type="term" value="F:structural constituent of ribosome"/>
    <property type="evidence" value="ECO:0007669"/>
    <property type="project" value="InterPro"/>
</dbReference>
<dbReference type="GO" id="GO:0006412">
    <property type="term" value="P:translation"/>
    <property type="evidence" value="ECO:0007669"/>
    <property type="project" value="UniProtKB-UniRule"/>
</dbReference>
<dbReference type="FunFam" id="3.30.420.80:FF:000001">
    <property type="entry name" value="30S ribosomal protein S11"/>
    <property type="match status" value="1"/>
</dbReference>
<dbReference type="Gene3D" id="3.30.420.80">
    <property type="entry name" value="Ribosomal protein S11"/>
    <property type="match status" value="1"/>
</dbReference>
<dbReference type="HAMAP" id="MF_01310">
    <property type="entry name" value="Ribosomal_uS11"/>
    <property type="match status" value="1"/>
</dbReference>
<dbReference type="InterPro" id="IPR001971">
    <property type="entry name" value="Ribosomal_uS11"/>
</dbReference>
<dbReference type="InterPro" id="IPR019981">
    <property type="entry name" value="Ribosomal_uS11_bac-type"/>
</dbReference>
<dbReference type="InterPro" id="IPR036967">
    <property type="entry name" value="Ribosomal_uS11_sf"/>
</dbReference>
<dbReference type="NCBIfam" id="NF003698">
    <property type="entry name" value="PRK05309.1"/>
    <property type="match status" value="1"/>
</dbReference>
<dbReference type="NCBIfam" id="TIGR03632">
    <property type="entry name" value="uS11_bact"/>
    <property type="match status" value="1"/>
</dbReference>
<dbReference type="PANTHER" id="PTHR11759">
    <property type="entry name" value="40S RIBOSOMAL PROTEIN S14/30S RIBOSOMAL PROTEIN S11"/>
    <property type="match status" value="1"/>
</dbReference>
<dbReference type="Pfam" id="PF00411">
    <property type="entry name" value="Ribosomal_S11"/>
    <property type="match status" value="1"/>
</dbReference>
<dbReference type="PIRSF" id="PIRSF002131">
    <property type="entry name" value="Ribosomal_S11"/>
    <property type="match status" value="1"/>
</dbReference>
<dbReference type="SUPFAM" id="SSF53137">
    <property type="entry name" value="Translational machinery components"/>
    <property type="match status" value="1"/>
</dbReference>
<organism>
    <name type="scientific">Legionella pneumophila subsp. pneumophila (strain Philadelphia 1 / ATCC 33152 / DSM 7513)</name>
    <dbReference type="NCBI Taxonomy" id="272624"/>
    <lineage>
        <taxon>Bacteria</taxon>
        <taxon>Pseudomonadati</taxon>
        <taxon>Pseudomonadota</taxon>
        <taxon>Gammaproteobacteria</taxon>
        <taxon>Legionellales</taxon>
        <taxon>Legionellaceae</taxon>
        <taxon>Legionella</taxon>
    </lineage>
</organism>
<name>RS11_LEGPH</name>
<protein>
    <recommendedName>
        <fullName evidence="1">Small ribosomal subunit protein uS11</fullName>
    </recommendedName>
    <alternativeName>
        <fullName evidence="2">30S ribosomal protein S11</fullName>
    </alternativeName>
</protein>
<gene>
    <name evidence="1" type="primary">rpsK</name>
    <name type="ordered locus">lpg0352</name>
</gene>
<evidence type="ECO:0000255" key="1">
    <source>
        <dbReference type="HAMAP-Rule" id="MF_01310"/>
    </source>
</evidence>
<evidence type="ECO:0000305" key="2"/>
<accession>Q5ZYM0</accession>
<comment type="function">
    <text evidence="1">Located on the platform of the 30S subunit, it bridges several disparate RNA helices of the 16S rRNA. Forms part of the Shine-Dalgarno cleft in the 70S ribosome.</text>
</comment>
<comment type="subunit">
    <text evidence="1">Part of the 30S ribosomal subunit. Interacts with proteins S7 and S18. Binds to IF-3.</text>
</comment>
<comment type="similarity">
    <text evidence="1">Belongs to the universal ribosomal protein uS11 family.</text>
</comment>